<sequence>MGESFLLLQPASPALSPTPSSLLLGPTITMRADVLIAALATGALVAAVPTSPKKPTPPKGDVSNPFVGKTQFVNPEWSNKLTQTYKSFLKKGDVKNAFRTLQAQKVSTFVWVSRLSELSRIDEAIATARRVQKTTGKKQIVGLVLYNLPDRDCSAGESAGELLSGENGFERYKEEFVKPYAQKVAAAKDLEFAIVLEPDSLGNLVTNLNIPLCAGAVDTYRDGIAHAITQLQQDHVHLYIDAAHGGWLGWNDNLPLAADEFAEVLKRADEASGKKNKIRGFATNVSNYNPLHAVVRENYTEWSNSWDESHYASSLAPHLEERGLPAHFIVDQGRVANPGARKEWGEWCNVAPSGFGPAPSTNTNNTVVDAIVWIKPGGESDGECGYFNAPRAGHWHDEFAQQLVQNAHPSVYENWWKFW</sequence>
<name>CEL6B_PODAN</name>
<keyword id="KW-0119">Carbohydrate metabolism</keyword>
<keyword id="KW-0136">Cellulose degradation</keyword>
<keyword id="KW-0325">Glycoprotein</keyword>
<keyword id="KW-0326">Glycosidase</keyword>
<keyword id="KW-0378">Hydrolase</keyword>
<keyword id="KW-0624">Polysaccharide degradation</keyword>
<keyword id="KW-1185">Reference proteome</keyword>
<keyword id="KW-0964">Secreted</keyword>
<keyword id="KW-0732">Signal</keyword>
<organism>
    <name type="scientific">Podospora anserina (strain S / ATCC MYA-4624 / DSM 980 / FGSC 10383)</name>
    <name type="common">Pleurage anserina</name>
    <dbReference type="NCBI Taxonomy" id="515849"/>
    <lineage>
        <taxon>Eukaryota</taxon>
        <taxon>Fungi</taxon>
        <taxon>Dikarya</taxon>
        <taxon>Ascomycota</taxon>
        <taxon>Pezizomycotina</taxon>
        <taxon>Sordariomycetes</taxon>
        <taxon>Sordariomycetidae</taxon>
        <taxon>Sordariales</taxon>
        <taxon>Podosporaceae</taxon>
        <taxon>Podospora</taxon>
        <taxon>Podospora anserina</taxon>
    </lineage>
</organism>
<feature type="signal peptide" evidence="2">
    <location>
        <begin position="1"/>
        <end position="47"/>
    </location>
</feature>
<feature type="chain" id="PRO_0000432650" description="1,4-beta-D-glucan cellobiohydrolase CEL6B" evidence="2">
    <location>
        <begin position="48"/>
        <end position="419"/>
    </location>
</feature>
<feature type="active site" description="Proton donor" evidence="4">
    <location>
        <position position="152"/>
    </location>
</feature>
<feature type="active site" description="Proton donor" evidence="4">
    <location>
        <position position="199"/>
    </location>
</feature>
<feature type="binding site" evidence="1">
    <location>
        <position position="111"/>
    </location>
    <ligand>
        <name>substrate</name>
    </ligand>
</feature>
<feature type="binding site" evidence="1">
    <location>
        <position position="113"/>
    </location>
    <ligand>
        <name>substrate</name>
    </ligand>
</feature>
<feature type="binding site" evidence="1">
    <location>
        <position position="247"/>
    </location>
    <ligand>
        <name>substrate</name>
    </ligand>
</feature>
<feature type="binding site" evidence="1">
    <location>
        <position position="287"/>
    </location>
    <ligand>
        <name>substrate</name>
    </ligand>
</feature>
<feature type="binding site" evidence="1">
    <location>
        <position position="347"/>
    </location>
    <ligand>
        <name>substrate</name>
    </ligand>
</feature>
<feature type="binding site" evidence="1">
    <location>
        <position position="375"/>
    </location>
    <ligand>
        <name>substrate</name>
    </ligand>
</feature>
<feature type="binding site" evidence="1">
    <location>
        <position position="379"/>
    </location>
    <ligand>
        <name>substrate</name>
    </ligand>
</feature>
<feature type="glycosylation site" description="N-linked (GlcNAc...) asparagine" evidence="3">
    <location>
        <position position="284"/>
    </location>
</feature>
<feature type="glycosylation site" description="N-linked (GlcNAc...) asparagine" evidence="3">
    <location>
        <position position="298"/>
    </location>
</feature>
<feature type="glycosylation site" description="N-linked (GlcNAc...) asparagine" evidence="3">
    <location>
        <position position="364"/>
    </location>
</feature>
<comment type="function">
    <text evidence="5">Exoglucanase that plays an important function in biomass degradation by catalyzing the hydrolysis of the non-reducing end beta-1,4-glucosidic linkages in cellulose and cellotetraose to release cellobiose. Hydrolyzes crystalline and amorphous cellulose but is inactive on hydroxyethyl cellulose, mannan, galactomannan, xyloglucan, arabinoxylan, arabinan, xylan, and pectin.</text>
</comment>
<comment type="catalytic activity">
    <reaction evidence="5">
        <text>Hydrolysis of (1-&gt;4)-beta-D-glucosidic linkages in cellulose and cellotetraose, releasing cellobiose from the non-reducing ends of the chains.</text>
        <dbReference type="EC" id="3.2.1.91"/>
    </reaction>
</comment>
<comment type="biophysicochemical properties">
    <kinetics>
        <KM evidence="5">43 uM for cellotetraose</KM>
    </kinetics>
    <phDependence>
        <text evidence="5">Optimum pH is 7.</text>
    </phDependence>
    <temperatureDependence>
        <text evidence="5">Optimum temperature is 45 degrees Celsius.</text>
    </temperatureDependence>
</comment>
<comment type="subcellular location">
    <subcellularLocation>
        <location evidence="7">Secreted</location>
    </subcellularLocation>
</comment>
<comment type="PTM">
    <text evidence="5">Both N- and O-glycosylated.</text>
</comment>
<comment type="similarity">
    <text evidence="7">Belongs to the glycosyl hydrolase 6 (cellulase B) family.</text>
</comment>
<proteinExistence type="evidence at protein level"/>
<gene>
    <name evidence="6" type="primary">CEL6B</name>
    <name type="ordered locus">Pa_2_13800</name>
    <name type="ORF">PODANS_2_13800</name>
</gene>
<accession>B2AC20</accession>
<evidence type="ECO:0000250" key="1">
    <source>
        <dbReference type="UniProtKB" id="Q9C1S9"/>
    </source>
</evidence>
<evidence type="ECO:0000255" key="2"/>
<evidence type="ECO:0000255" key="3">
    <source>
        <dbReference type="PROSITE-ProRule" id="PRU00498"/>
    </source>
</evidence>
<evidence type="ECO:0000255" key="4">
    <source>
        <dbReference type="PROSITE-ProRule" id="PRU10057"/>
    </source>
</evidence>
<evidence type="ECO:0000269" key="5">
    <source>
    </source>
</evidence>
<evidence type="ECO:0000303" key="6">
    <source>
    </source>
</evidence>
<evidence type="ECO:0000305" key="7"/>
<protein>
    <recommendedName>
        <fullName evidence="7">1,4-beta-D-glucan cellobiohydrolase CEL6B</fullName>
        <ecNumber evidence="5">3.2.1.91</ecNumber>
    </recommendedName>
    <alternativeName>
        <fullName evidence="7">Beta-glucancellobiohydrolase CEL6B</fullName>
    </alternativeName>
    <alternativeName>
        <fullName evidence="7">Exocellobiohydrolase CEL6B</fullName>
    </alternativeName>
    <alternativeName>
        <fullName evidence="7">Exoglucanase CEL6B</fullName>
    </alternativeName>
</protein>
<dbReference type="EC" id="3.2.1.91" evidence="5"/>
<dbReference type="EMBL" id="CU633447">
    <property type="protein sequence ID" value="CAP60981.1"/>
    <property type="molecule type" value="Genomic_DNA"/>
</dbReference>
<dbReference type="EMBL" id="FO904937">
    <property type="protein sequence ID" value="CDP26446.1"/>
    <property type="molecule type" value="Genomic_DNA"/>
</dbReference>
<dbReference type="RefSeq" id="XP_001903209.1">
    <property type="nucleotide sequence ID" value="XM_001903174.1"/>
</dbReference>
<dbReference type="SMR" id="B2AC20"/>
<dbReference type="STRING" id="515849.B2AC20"/>
<dbReference type="CAZy" id="GH6">
    <property type="family name" value="Glycoside Hydrolase Family 6"/>
</dbReference>
<dbReference type="GlyCosmos" id="B2AC20">
    <property type="glycosylation" value="3 sites, No reported glycans"/>
</dbReference>
<dbReference type="GeneID" id="6187311"/>
<dbReference type="KEGG" id="pan:PODANSg221"/>
<dbReference type="VEuPathDB" id="FungiDB:PODANS_2_13800"/>
<dbReference type="eggNOG" id="ENOG502SATK">
    <property type="taxonomic scope" value="Eukaryota"/>
</dbReference>
<dbReference type="HOGENOM" id="CLU_015488_0_0_1"/>
<dbReference type="InParanoid" id="B2AC20"/>
<dbReference type="OrthoDB" id="64893at2759"/>
<dbReference type="Proteomes" id="UP000001197">
    <property type="component" value="Chromosome 2"/>
</dbReference>
<dbReference type="GO" id="GO:0005576">
    <property type="term" value="C:extracellular region"/>
    <property type="evidence" value="ECO:0007669"/>
    <property type="project" value="UniProtKB-SubCell"/>
</dbReference>
<dbReference type="GO" id="GO:0016162">
    <property type="term" value="F:cellulose 1,4-beta-cellobiosidase activity"/>
    <property type="evidence" value="ECO:0007669"/>
    <property type="project" value="UniProtKB-EC"/>
</dbReference>
<dbReference type="GO" id="GO:0030245">
    <property type="term" value="P:cellulose catabolic process"/>
    <property type="evidence" value="ECO:0007669"/>
    <property type="project" value="UniProtKB-KW"/>
</dbReference>
<dbReference type="Gene3D" id="3.20.20.40">
    <property type="entry name" value="1, 4-beta cellobiohydrolase"/>
    <property type="match status" value="1"/>
</dbReference>
<dbReference type="InterPro" id="IPR016288">
    <property type="entry name" value="Beta_cellobiohydrolase"/>
</dbReference>
<dbReference type="InterPro" id="IPR036434">
    <property type="entry name" value="Beta_cellobiohydrolase_sf"/>
</dbReference>
<dbReference type="InterPro" id="IPR001524">
    <property type="entry name" value="Glyco_hydro_6_CS"/>
</dbReference>
<dbReference type="PANTHER" id="PTHR34876">
    <property type="match status" value="1"/>
</dbReference>
<dbReference type="PANTHER" id="PTHR34876:SF10">
    <property type="entry name" value="GLUCANASE"/>
    <property type="match status" value="1"/>
</dbReference>
<dbReference type="Pfam" id="PF01341">
    <property type="entry name" value="Glyco_hydro_6"/>
    <property type="match status" value="1"/>
</dbReference>
<dbReference type="PIRSF" id="PIRSF001100">
    <property type="entry name" value="Beta_cellobiohydrolase"/>
    <property type="match status" value="1"/>
</dbReference>
<dbReference type="PRINTS" id="PR00733">
    <property type="entry name" value="GLHYDRLASE6"/>
</dbReference>
<dbReference type="SUPFAM" id="SSF51989">
    <property type="entry name" value="Glycosyl hydrolases family 6, cellulases"/>
    <property type="match status" value="1"/>
</dbReference>
<dbReference type="PROSITE" id="PS00656">
    <property type="entry name" value="GLYCOSYL_HYDROL_F6_2"/>
    <property type="match status" value="1"/>
</dbReference>
<reference key="1">
    <citation type="journal article" date="2008" name="Genome Biol.">
        <title>The genome sequence of the model ascomycete fungus Podospora anserina.</title>
        <authorList>
            <person name="Espagne E."/>
            <person name="Lespinet O."/>
            <person name="Malagnac F."/>
            <person name="Da Silva C."/>
            <person name="Jaillon O."/>
            <person name="Porcel B.M."/>
            <person name="Couloux A."/>
            <person name="Aury J.-M."/>
            <person name="Segurens B."/>
            <person name="Poulain J."/>
            <person name="Anthouard V."/>
            <person name="Grossetete S."/>
            <person name="Khalili H."/>
            <person name="Coppin E."/>
            <person name="Dequard-Chablat M."/>
            <person name="Picard M."/>
            <person name="Contamine V."/>
            <person name="Arnaise S."/>
            <person name="Bourdais A."/>
            <person name="Berteaux-Lecellier V."/>
            <person name="Gautheret D."/>
            <person name="de Vries R.P."/>
            <person name="Battaglia E."/>
            <person name="Coutinho P.M."/>
            <person name="Danchin E.G.J."/>
            <person name="Henrissat B."/>
            <person name="El Khoury R."/>
            <person name="Sainsard-Chanet A."/>
            <person name="Boivin A."/>
            <person name="Pinan-Lucarre B."/>
            <person name="Sellem C.H."/>
            <person name="Debuchy R."/>
            <person name="Wincker P."/>
            <person name="Weissenbach J."/>
            <person name="Silar P."/>
        </authorList>
    </citation>
    <scope>NUCLEOTIDE SEQUENCE [LARGE SCALE GENOMIC DNA]</scope>
    <source>
        <strain>S / ATCC MYA-4624 / DSM 980 / FGSC 10383</strain>
    </source>
</reference>
<reference key="2">
    <citation type="journal article" date="2014" name="Genetics">
        <title>Maintaining two mating types: Structure of the mating type locus and its role in heterokaryosis in Podospora anserina.</title>
        <authorList>
            <person name="Grognet P."/>
            <person name="Bidard F."/>
            <person name="Kuchly C."/>
            <person name="Tong L.C.H."/>
            <person name="Coppin E."/>
            <person name="Benkhali J.A."/>
            <person name="Couloux A."/>
            <person name="Wincker P."/>
            <person name="Debuchy R."/>
            <person name="Silar P."/>
        </authorList>
    </citation>
    <scope>GENOME REANNOTATION</scope>
    <source>
        <strain>S / ATCC MYA-4624 / DSM 980 / FGSC 10383</strain>
    </source>
</reference>
<reference key="3">
    <citation type="journal article" date="2013" name="Appl. Environ. Microbiol.">
        <title>Insights into exo- and endoglucanase activities of family 6 glycoside hydrolases from Podospora anserina.</title>
        <authorList>
            <person name="Poidevin L."/>
            <person name="Feliu J."/>
            <person name="Doan A."/>
            <person name="Berrin J.G."/>
            <person name="Bey M."/>
            <person name="Coutinho P.M."/>
            <person name="Henrissat B."/>
            <person name="Record E."/>
            <person name="Heiss-Blanquet S."/>
        </authorList>
    </citation>
    <scope>FUNCTION</scope>
    <scope>CATALYTIC ACTIVITY</scope>
    <scope>BIOPHYSICOCHEMICAL PROPERTIES</scope>
    <scope>GLYCOSYLATION</scope>
</reference>